<organism>
    <name type="scientific">Flavobacterium psychrophilum (strain ATCC 49511 / DSM 21280 / CIP 103535 / JIP02/86)</name>
    <dbReference type="NCBI Taxonomy" id="402612"/>
    <lineage>
        <taxon>Bacteria</taxon>
        <taxon>Pseudomonadati</taxon>
        <taxon>Bacteroidota</taxon>
        <taxon>Flavobacteriia</taxon>
        <taxon>Flavobacteriales</taxon>
        <taxon>Flavobacteriaceae</taxon>
        <taxon>Flavobacterium</taxon>
    </lineage>
</organism>
<sequence>MSTLQQSASGKKDGDIRYLTPLNIDTNKTKKYCRFKKSGIKYIDYKDADFLLKFVNEQGKILPRRLTGTSLKYQRKVSVAVKRARHLAFMPYVADLLK</sequence>
<gene>
    <name evidence="1" type="primary">rpsR</name>
    <name type="ordered locus">FP1850</name>
</gene>
<keyword id="KW-1185">Reference proteome</keyword>
<keyword id="KW-0687">Ribonucleoprotein</keyword>
<keyword id="KW-0689">Ribosomal protein</keyword>
<keyword id="KW-0694">RNA-binding</keyword>
<keyword id="KW-0699">rRNA-binding</keyword>
<name>RS18_FLAPJ</name>
<evidence type="ECO:0000255" key="1">
    <source>
        <dbReference type="HAMAP-Rule" id="MF_00270"/>
    </source>
</evidence>
<evidence type="ECO:0000305" key="2"/>
<comment type="function">
    <text evidence="1">Binds as a heterodimer with protein bS6 to the central domain of the 16S rRNA, where it helps stabilize the platform of the 30S subunit.</text>
</comment>
<comment type="subunit">
    <text evidence="1">Part of the 30S ribosomal subunit. Forms a tight heterodimer with protein bS6.</text>
</comment>
<comment type="similarity">
    <text evidence="1">Belongs to the bacterial ribosomal protein bS18 family.</text>
</comment>
<accession>A6H0P2</accession>
<feature type="chain" id="PRO_0000345468" description="Small ribosomal subunit protein bS18">
    <location>
        <begin position="1"/>
        <end position="98"/>
    </location>
</feature>
<reference key="1">
    <citation type="journal article" date="2007" name="Nat. Biotechnol.">
        <title>Complete genome sequence of the fish pathogen Flavobacterium psychrophilum.</title>
        <authorList>
            <person name="Duchaud E."/>
            <person name="Boussaha M."/>
            <person name="Loux V."/>
            <person name="Bernardet J.-F."/>
            <person name="Michel C."/>
            <person name="Kerouault B."/>
            <person name="Mondot S."/>
            <person name="Nicolas P."/>
            <person name="Bossy R."/>
            <person name="Caron C."/>
            <person name="Bessieres P."/>
            <person name="Gibrat J.-F."/>
            <person name="Claverol S."/>
            <person name="Dumetz F."/>
            <person name="Le Henaff M."/>
            <person name="Benmansour A."/>
        </authorList>
    </citation>
    <scope>NUCLEOTIDE SEQUENCE [LARGE SCALE GENOMIC DNA]</scope>
    <source>
        <strain>ATCC 49511 / DSM 21280 / CIP 103535 / JIP02/86</strain>
    </source>
</reference>
<dbReference type="EMBL" id="AM398681">
    <property type="protein sequence ID" value="CAL43916.1"/>
    <property type="molecule type" value="Genomic_DNA"/>
</dbReference>
<dbReference type="RefSeq" id="WP_011963955.1">
    <property type="nucleotide sequence ID" value="NC_009613.3"/>
</dbReference>
<dbReference type="RefSeq" id="YP_001296719.1">
    <property type="nucleotide sequence ID" value="NC_009613.3"/>
</dbReference>
<dbReference type="SMR" id="A6H0P2"/>
<dbReference type="STRING" id="402612.FP1850"/>
<dbReference type="EnsemblBacteria" id="CAL43916">
    <property type="protein sequence ID" value="CAL43916"/>
    <property type="gene ID" value="FP1850"/>
</dbReference>
<dbReference type="GeneID" id="66551966"/>
<dbReference type="KEGG" id="fps:FP1850"/>
<dbReference type="PATRIC" id="fig|402612.5.peg.1876"/>
<dbReference type="eggNOG" id="COG0238">
    <property type="taxonomic scope" value="Bacteria"/>
</dbReference>
<dbReference type="HOGENOM" id="CLU_148710_2_0_10"/>
<dbReference type="OrthoDB" id="9812008at2"/>
<dbReference type="Proteomes" id="UP000006394">
    <property type="component" value="Chromosome"/>
</dbReference>
<dbReference type="GO" id="GO:0022627">
    <property type="term" value="C:cytosolic small ribosomal subunit"/>
    <property type="evidence" value="ECO:0007669"/>
    <property type="project" value="TreeGrafter"/>
</dbReference>
<dbReference type="GO" id="GO:0070181">
    <property type="term" value="F:small ribosomal subunit rRNA binding"/>
    <property type="evidence" value="ECO:0007669"/>
    <property type="project" value="TreeGrafter"/>
</dbReference>
<dbReference type="GO" id="GO:0003735">
    <property type="term" value="F:structural constituent of ribosome"/>
    <property type="evidence" value="ECO:0007669"/>
    <property type="project" value="InterPro"/>
</dbReference>
<dbReference type="GO" id="GO:0006412">
    <property type="term" value="P:translation"/>
    <property type="evidence" value="ECO:0007669"/>
    <property type="project" value="UniProtKB-UniRule"/>
</dbReference>
<dbReference type="FunFam" id="4.10.640.10:FF:000004">
    <property type="entry name" value="30S ribosomal protein S18"/>
    <property type="match status" value="1"/>
</dbReference>
<dbReference type="Gene3D" id="4.10.640.10">
    <property type="entry name" value="Ribosomal protein S18"/>
    <property type="match status" value="1"/>
</dbReference>
<dbReference type="HAMAP" id="MF_00270">
    <property type="entry name" value="Ribosomal_bS18"/>
    <property type="match status" value="1"/>
</dbReference>
<dbReference type="InterPro" id="IPR001648">
    <property type="entry name" value="Ribosomal_bS18"/>
</dbReference>
<dbReference type="InterPro" id="IPR036870">
    <property type="entry name" value="Ribosomal_bS18_sf"/>
</dbReference>
<dbReference type="NCBIfam" id="TIGR00165">
    <property type="entry name" value="S18"/>
    <property type="match status" value="1"/>
</dbReference>
<dbReference type="PANTHER" id="PTHR13479">
    <property type="entry name" value="30S RIBOSOMAL PROTEIN S18"/>
    <property type="match status" value="1"/>
</dbReference>
<dbReference type="PANTHER" id="PTHR13479:SF40">
    <property type="entry name" value="SMALL RIBOSOMAL SUBUNIT PROTEIN BS18M"/>
    <property type="match status" value="1"/>
</dbReference>
<dbReference type="Pfam" id="PF01084">
    <property type="entry name" value="Ribosomal_S18"/>
    <property type="match status" value="1"/>
</dbReference>
<dbReference type="PRINTS" id="PR00974">
    <property type="entry name" value="RIBOSOMALS18"/>
</dbReference>
<dbReference type="SUPFAM" id="SSF46911">
    <property type="entry name" value="Ribosomal protein S18"/>
    <property type="match status" value="1"/>
</dbReference>
<protein>
    <recommendedName>
        <fullName evidence="1">Small ribosomal subunit protein bS18</fullName>
    </recommendedName>
    <alternativeName>
        <fullName evidence="2">30S ribosomal protein S18</fullName>
    </alternativeName>
</protein>
<proteinExistence type="inferred from homology"/>